<protein>
    <recommendedName>
        <fullName evidence="1">Large ribosomal subunit protein uL5</fullName>
    </recommendedName>
    <alternativeName>
        <fullName evidence="2">50S ribosomal protein L5</fullName>
    </alternativeName>
</protein>
<accession>B8F6Q9</accession>
<dbReference type="EMBL" id="CP001321">
    <property type="protein sequence ID" value="ACL33011.1"/>
    <property type="molecule type" value="Genomic_DNA"/>
</dbReference>
<dbReference type="RefSeq" id="WP_005711994.1">
    <property type="nucleotide sequence ID" value="NC_011852.1"/>
</dbReference>
<dbReference type="SMR" id="B8F6Q9"/>
<dbReference type="STRING" id="557723.HAPS_1442"/>
<dbReference type="GeneID" id="66617807"/>
<dbReference type="KEGG" id="hap:HAPS_1442"/>
<dbReference type="HOGENOM" id="CLU_061015_2_1_6"/>
<dbReference type="Proteomes" id="UP000006743">
    <property type="component" value="Chromosome"/>
</dbReference>
<dbReference type="GO" id="GO:1990904">
    <property type="term" value="C:ribonucleoprotein complex"/>
    <property type="evidence" value="ECO:0007669"/>
    <property type="project" value="UniProtKB-KW"/>
</dbReference>
<dbReference type="GO" id="GO:0005840">
    <property type="term" value="C:ribosome"/>
    <property type="evidence" value="ECO:0007669"/>
    <property type="project" value="UniProtKB-KW"/>
</dbReference>
<dbReference type="GO" id="GO:0019843">
    <property type="term" value="F:rRNA binding"/>
    <property type="evidence" value="ECO:0007669"/>
    <property type="project" value="UniProtKB-UniRule"/>
</dbReference>
<dbReference type="GO" id="GO:0003735">
    <property type="term" value="F:structural constituent of ribosome"/>
    <property type="evidence" value="ECO:0007669"/>
    <property type="project" value="InterPro"/>
</dbReference>
<dbReference type="GO" id="GO:0000049">
    <property type="term" value="F:tRNA binding"/>
    <property type="evidence" value="ECO:0007669"/>
    <property type="project" value="UniProtKB-UniRule"/>
</dbReference>
<dbReference type="GO" id="GO:0006412">
    <property type="term" value="P:translation"/>
    <property type="evidence" value="ECO:0007669"/>
    <property type="project" value="UniProtKB-UniRule"/>
</dbReference>
<dbReference type="FunFam" id="3.30.1440.10:FF:000001">
    <property type="entry name" value="50S ribosomal protein L5"/>
    <property type="match status" value="1"/>
</dbReference>
<dbReference type="Gene3D" id="3.30.1440.10">
    <property type="match status" value="1"/>
</dbReference>
<dbReference type="HAMAP" id="MF_01333_B">
    <property type="entry name" value="Ribosomal_uL5_B"/>
    <property type="match status" value="1"/>
</dbReference>
<dbReference type="InterPro" id="IPR002132">
    <property type="entry name" value="Ribosomal_uL5"/>
</dbReference>
<dbReference type="InterPro" id="IPR020930">
    <property type="entry name" value="Ribosomal_uL5_bac-type"/>
</dbReference>
<dbReference type="InterPro" id="IPR031309">
    <property type="entry name" value="Ribosomal_uL5_C"/>
</dbReference>
<dbReference type="InterPro" id="IPR020929">
    <property type="entry name" value="Ribosomal_uL5_CS"/>
</dbReference>
<dbReference type="InterPro" id="IPR022803">
    <property type="entry name" value="Ribosomal_uL5_dom_sf"/>
</dbReference>
<dbReference type="InterPro" id="IPR031310">
    <property type="entry name" value="Ribosomal_uL5_N"/>
</dbReference>
<dbReference type="NCBIfam" id="NF000585">
    <property type="entry name" value="PRK00010.1"/>
    <property type="match status" value="1"/>
</dbReference>
<dbReference type="PANTHER" id="PTHR11994">
    <property type="entry name" value="60S RIBOSOMAL PROTEIN L11-RELATED"/>
    <property type="match status" value="1"/>
</dbReference>
<dbReference type="Pfam" id="PF00281">
    <property type="entry name" value="Ribosomal_L5"/>
    <property type="match status" value="1"/>
</dbReference>
<dbReference type="Pfam" id="PF00673">
    <property type="entry name" value="Ribosomal_L5_C"/>
    <property type="match status" value="1"/>
</dbReference>
<dbReference type="PIRSF" id="PIRSF002161">
    <property type="entry name" value="Ribosomal_L5"/>
    <property type="match status" value="1"/>
</dbReference>
<dbReference type="SUPFAM" id="SSF55282">
    <property type="entry name" value="RL5-like"/>
    <property type="match status" value="1"/>
</dbReference>
<dbReference type="PROSITE" id="PS00358">
    <property type="entry name" value="RIBOSOMAL_L5"/>
    <property type="match status" value="1"/>
</dbReference>
<keyword id="KW-1185">Reference proteome</keyword>
<keyword id="KW-0687">Ribonucleoprotein</keyword>
<keyword id="KW-0689">Ribosomal protein</keyword>
<keyword id="KW-0694">RNA-binding</keyword>
<keyword id="KW-0699">rRNA-binding</keyword>
<keyword id="KW-0820">tRNA-binding</keyword>
<feature type="chain" id="PRO_1000166135" description="Large ribosomal subunit protein uL5">
    <location>
        <begin position="1"/>
        <end position="179"/>
    </location>
</feature>
<reference key="1">
    <citation type="journal article" date="2009" name="J. Bacteriol.">
        <title>Complete genome sequence of Haemophilus parasuis SH0165.</title>
        <authorList>
            <person name="Yue M."/>
            <person name="Yang F."/>
            <person name="Yang J."/>
            <person name="Bei W."/>
            <person name="Cai X."/>
            <person name="Chen L."/>
            <person name="Dong J."/>
            <person name="Zhou R."/>
            <person name="Jin M."/>
            <person name="Jin Q."/>
            <person name="Chen H."/>
        </authorList>
    </citation>
    <scope>NUCLEOTIDE SEQUENCE [LARGE SCALE GENOMIC DNA]</scope>
    <source>
        <strain>SH0165</strain>
    </source>
</reference>
<name>RL5_GLAP5</name>
<organism>
    <name type="scientific">Glaesserella parasuis serovar 5 (strain SH0165)</name>
    <name type="common">Haemophilus parasuis</name>
    <dbReference type="NCBI Taxonomy" id="557723"/>
    <lineage>
        <taxon>Bacteria</taxon>
        <taxon>Pseudomonadati</taxon>
        <taxon>Pseudomonadota</taxon>
        <taxon>Gammaproteobacteria</taxon>
        <taxon>Pasteurellales</taxon>
        <taxon>Pasteurellaceae</taxon>
        <taxon>Glaesserella</taxon>
    </lineage>
</organism>
<proteinExistence type="inferred from homology"/>
<sequence length="179" mass="20342">MAKLHDYYRDTVVNELKAKFNYSSVMQVPRIEKITLNMGVGEALTDKKLLDNAVADLTAISGQKPLITKARKSVAGFKIRQGYPIGCKVTLRGERMWEFFERLITIAVPRIRDFRGLNAKSFDGRGNYSMGVREQIIFPEIDYDKVDRVRGLDITITTTAKTDEEGQALLAAFNFPFRK</sequence>
<comment type="function">
    <text evidence="1">This is one of the proteins that bind and probably mediate the attachment of the 5S RNA into the large ribosomal subunit, where it forms part of the central protuberance. In the 70S ribosome it contacts protein S13 of the 30S subunit (bridge B1b), connecting the 2 subunits; this bridge is implicated in subunit movement. Contacts the P site tRNA; the 5S rRNA and some of its associated proteins might help stabilize positioning of ribosome-bound tRNAs.</text>
</comment>
<comment type="subunit">
    <text evidence="1">Part of the 50S ribosomal subunit; part of the 5S rRNA/L5/L18/L25 subcomplex. Contacts the 5S rRNA and the P site tRNA. Forms a bridge to the 30S subunit in the 70S ribosome.</text>
</comment>
<comment type="similarity">
    <text evidence="1">Belongs to the universal ribosomal protein uL5 family.</text>
</comment>
<evidence type="ECO:0000255" key="1">
    <source>
        <dbReference type="HAMAP-Rule" id="MF_01333"/>
    </source>
</evidence>
<evidence type="ECO:0000305" key="2"/>
<gene>
    <name evidence="1" type="primary">rplE</name>
    <name type="ordered locus">HAPS_1442</name>
</gene>